<reference key="1">
    <citation type="journal article" date="2000" name="Nature">
        <title>Sequence and analysis of chromosome 1 of the plant Arabidopsis thaliana.</title>
        <authorList>
            <person name="Theologis A."/>
            <person name="Ecker J.R."/>
            <person name="Palm C.J."/>
            <person name="Federspiel N.A."/>
            <person name="Kaul S."/>
            <person name="White O."/>
            <person name="Alonso J."/>
            <person name="Altafi H."/>
            <person name="Araujo R."/>
            <person name="Bowman C.L."/>
            <person name="Brooks S.Y."/>
            <person name="Buehler E."/>
            <person name="Chan A."/>
            <person name="Chao Q."/>
            <person name="Chen H."/>
            <person name="Cheuk R.F."/>
            <person name="Chin C.W."/>
            <person name="Chung M.K."/>
            <person name="Conn L."/>
            <person name="Conway A.B."/>
            <person name="Conway A.R."/>
            <person name="Creasy T.H."/>
            <person name="Dewar K."/>
            <person name="Dunn P."/>
            <person name="Etgu P."/>
            <person name="Feldblyum T.V."/>
            <person name="Feng J.-D."/>
            <person name="Fong B."/>
            <person name="Fujii C.Y."/>
            <person name="Gill J.E."/>
            <person name="Goldsmith A.D."/>
            <person name="Haas B."/>
            <person name="Hansen N.F."/>
            <person name="Hughes B."/>
            <person name="Huizar L."/>
            <person name="Hunter J.L."/>
            <person name="Jenkins J."/>
            <person name="Johnson-Hopson C."/>
            <person name="Khan S."/>
            <person name="Khaykin E."/>
            <person name="Kim C.J."/>
            <person name="Koo H.L."/>
            <person name="Kremenetskaia I."/>
            <person name="Kurtz D.B."/>
            <person name="Kwan A."/>
            <person name="Lam B."/>
            <person name="Langin-Hooper S."/>
            <person name="Lee A."/>
            <person name="Lee J.M."/>
            <person name="Lenz C.A."/>
            <person name="Li J.H."/>
            <person name="Li Y.-P."/>
            <person name="Lin X."/>
            <person name="Liu S.X."/>
            <person name="Liu Z.A."/>
            <person name="Luros J.S."/>
            <person name="Maiti R."/>
            <person name="Marziali A."/>
            <person name="Militscher J."/>
            <person name="Miranda M."/>
            <person name="Nguyen M."/>
            <person name="Nierman W.C."/>
            <person name="Osborne B.I."/>
            <person name="Pai G."/>
            <person name="Peterson J."/>
            <person name="Pham P.K."/>
            <person name="Rizzo M."/>
            <person name="Rooney T."/>
            <person name="Rowley D."/>
            <person name="Sakano H."/>
            <person name="Salzberg S.L."/>
            <person name="Schwartz J.R."/>
            <person name="Shinn P."/>
            <person name="Southwick A.M."/>
            <person name="Sun H."/>
            <person name="Tallon L.J."/>
            <person name="Tambunga G."/>
            <person name="Toriumi M.J."/>
            <person name="Town C.D."/>
            <person name="Utterback T."/>
            <person name="Van Aken S."/>
            <person name="Vaysberg M."/>
            <person name="Vysotskaia V.S."/>
            <person name="Walker M."/>
            <person name="Wu D."/>
            <person name="Yu G."/>
            <person name="Fraser C.M."/>
            <person name="Venter J.C."/>
            <person name="Davis R.W."/>
        </authorList>
    </citation>
    <scope>NUCLEOTIDE SEQUENCE [LARGE SCALE GENOMIC DNA]</scope>
    <source>
        <strain>cv. Columbia</strain>
    </source>
</reference>
<reference key="2">
    <citation type="journal article" date="2017" name="Plant J.">
        <title>Araport11: a complete reannotation of the Arabidopsis thaliana reference genome.</title>
        <authorList>
            <person name="Cheng C.Y."/>
            <person name="Krishnakumar V."/>
            <person name="Chan A.P."/>
            <person name="Thibaud-Nissen F."/>
            <person name="Schobel S."/>
            <person name="Town C.D."/>
        </authorList>
    </citation>
    <scope>GENOME REANNOTATION</scope>
    <source>
        <strain>cv. Columbia</strain>
    </source>
</reference>
<keyword id="KW-0880">Kelch repeat</keyword>
<keyword id="KW-1185">Reference proteome</keyword>
<keyword id="KW-0677">Repeat</keyword>
<accession>Q9LP59</accession>
<sequence length="409" mass="48278">MATMISNLPRDLMEEILSRVPLKSMRAVRLTCKNWHTLSITISESLAKMYISKTTRESREGESTIITLMNYKLCLTSLVVDVDPYIEHKGKLTCFNLEHQVKISQVFYYEDDTITTRLVVWNPYWGQTRQIKTRYSHHAFSGRDSTYMFNYSLGYENKNSCRSHKLLRFIDYHWNYRGLHQFFWYEIYDFDSDLWTTLDVTPHWFIVISQSGVSLKGNTYWCARKRSGGYSDHIICFDFTRERFGPLLPLPFSFIDRHHSCVILSCVSEEKLAVLFQYKDHYYKNVVEIWITAKLEAEMVSWSKFLRINTGPIIHTSFFINEEKKVAIGFNDNRKTINIIGEAGYFRELDLGEHAEPYRRRHVFSYVPSSVQIKETAPGNIKKHQSSIETRLFDRNMLRLVAFEKKVSE</sequence>
<protein>
    <recommendedName>
        <fullName>F-box/kelch-repeat protein At1g48625</fullName>
    </recommendedName>
</protein>
<name>FBK20_ARATH</name>
<evidence type="ECO:0000255" key="1">
    <source>
        <dbReference type="PROSITE-ProRule" id="PRU00080"/>
    </source>
</evidence>
<organism>
    <name type="scientific">Arabidopsis thaliana</name>
    <name type="common">Mouse-ear cress</name>
    <dbReference type="NCBI Taxonomy" id="3702"/>
    <lineage>
        <taxon>Eukaryota</taxon>
        <taxon>Viridiplantae</taxon>
        <taxon>Streptophyta</taxon>
        <taxon>Embryophyta</taxon>
        <taxon>Tracheophyta</taxon>
        <taxon>Spermatophyta</taxon>
        <taxon>Magnoliopsida</taxon>
        <taxon>eudicotyledons</taxon>
        <taxon>Gunneridae</taxon>
        <taxon>Pentapetalae</taxon>
        <taxon>rosids</taxon>
        <taxon>malvids</taxon>
        <taxon>Brassicales</taxon>
        <taxon>Brassicaceae</taxon>
        <taxon>Camelineae</taxon>
        <taxon>Arabidopsis</taxon>
    </lineage>
</organism>
<proteinExistence type="predicted"/>
<gene>
    <name type="ordered locus">At1g48625</name>
    <name type="ORF">T1N15.27</name>
</gene>
<dbReference type="EMBL" id="AC020889">
    <property type="protein sequence ID" value="AAF79707.1"/>
    <property type="molecule type" value="Genomic_DNA"/>
</dbReference>
<dbReference type="EMBL" id="AC074308">
    <property type="status" value="NOT_ANNOTATED_CDS"/>
    <property type="molecule type" value="Genomic_DNA"/>
</dbReference>
<dbReference type="EMBL" id="CP002684">
    <property type="status" value="NOT_ANNOTATED_CDS"/>
    <property type="molecule type" value="Genomic_DNA"/>
</dbReference>
<dbReference type="FunCoup" id="Q9LP59">
    <property type="interactions" value="1"/>
</dbReference>
<dbReference type="STRING" id="3702.Q9LP59"/>
<dbReference type="Araport" id="AT1G48625"/>
<dbReference type="TAIR" id="AT1G48625"/>
<dbReference type="InParanoid" id="Q9LP59"/>
<dbReference type="PRO" id="PR:Q9LP59"/>
<dbReference type="Proteomes" id="UP000006548">
    <property type="component" value="Chromosome 1"/>
</dbReference>
<dbReference type="ExpressionAtlas" id="Q9LP59">
    <property type="expression patterns" value="baseline and differential"/>
</dbReference>
<dbReference type="Gene3D" id="1.20.1280.50">
    <property type="match status" value="1"/>
</dbReference>
<dbReference type="InterPro" id="IPR050233">
    <property type="entry name" value="A_thaliana_F-box"/>
</dbReference>
<dbReference type="InterPro" id="IPR006527">
    <property type="entry name" value="F-box-assoc_dom_typ1"/>
</dbReference>
<dbReference type="InterPro" id="IPR017451">
    <property type="entry name" value="F-box-assoc_interact_dom"/>
</dbReference>
<dbReference type="InterPro" id="IPR036047">
    <property type="entry name" value="F-box-like_dom_sf"/>
</dbReference>
<dbReference type="InterPro" id="IPR001810">
    <property type="entry name" value="F-box_dom"/>
</dbReference>
<dbReference type="InterPro" id="IPR011043">
    <property type="entry name" value="Gal_Oxase/kelch_b-propeller"/>
</dbReference>
<dbReference type="NCBIfam" id="TIGR01640">
    <property type="entry name" value="F_box_assoc_1"/>
    <property type="match status" value="1"/>
</dbReference>
<dbReference type="PANTHER" id="PTHR47993:SF37">
    <property type="entry name" value="F-BOX ASSOCIATED UBIQUITINATION EFFECTOR FAMILY PROTEIN"/>
    <property type="match status" value="1"/>
</dbReference>
<dbReference type="PANTHER" id="PTHR47993">
    <property type="entry name" value="OS09G0372900 PROTEIN-RELATED"/>
    <property type="match status" value="1"/>
</dbReference>
<dbReference type="Pfam" id="PF00646">
    <property type="entry name" value="F-box"/>
    <property type="match status" value="1"/>
</dbReference>
<dbReference type="Pfam" id="PF07734">
    <property type="entry name" value="FBA_1"/>
    <property type="match status" value="1"/>
</dbReference>
<dbReference type="SMART" id="SM00256">
    <property type="entry name" value="FBOX"/>
    <property type="match status" value="1"/>
</dbReference>
<dbReference type="SUPFAM" id="SSF81383">
    <property type="entry name" value="F-box domain"/>
    <property type="match status" value="1"/>
</dbReference>
<dbReference type="SUPFAM" id="SSF50965">
    <property type="entry name" value="Galactose oxidase, central domain"/>
    <property type="match status" value="1"/>
</dbReference>
<dbReference type="PROSITE" id="PS50181">
    <property type="entry name" value="FBOX"/>
    <property type="match status" value="1"/>
</dbReference>
<feature type="chain" id="PRO_0000283571" description="F-box/kelch-repeat protein At1g48625">
    <location>
        <begin position="1"/>
        <end position="409"/>
    </location>
</feature>
<feature type="domain" description="F-box" evidence="1">
    <location>
        <begin position="2"/>
        <end position="49"/>
    </location>
</feature>
<feature type="repeat" description="Kelch 1">
    <location>
        <begin position="169"/>
        <end position="218"/>
    </location>
</feature>
<feature type="repeat" description="Kelch 2">
    <location>
        <begin position="221"/>
        <end position="266"/>
    </location>
</feature>